<keyword id="KW-0966">Cell projection</keyword>
<keyword id="KW-0970">Cilium biogenesis/degradation</keyword>
<keyword id="KW-0175">Coiled coil</keyword>
<keyword id="KW-0963">Cytoplasm</keyword>
<keyword id="KW-0206">Cytoskeleton</keyword>
<keyword id="KW-0221">Differentiation</keyword>
<keyword id="KW-0333">Golgi apparatus</keyword>
<keyword id="KW-1185">Reference proteome</keyword>
<keyword id="KW-0744">Spermatogenesis</keyword>
<evidence type="ECO:0000250" key="1">
    <source>
        <dbReference type="UniProtKB" id="Q61025"/>
    </source>
</evidence>
<evidence type="ECO:0000255" key="2"/>
<dbReference type="EMBL" id="BC082442">
    <property type="protein sequence ID" value="AAH82442.1"/>
    <property type="molecule type" value="mRNA"/>
</dbReference>
<dbReference type="RefSeq" id="NP_001087895.1">
    <property type="nucleotide sequence ID" value="NM_001094426.1"/>
</dbReference>
<dbReference type="RefSeq" id="XP_018103858.1">
    <property type="nucleotide sequence ID" value="XM_018248369.1"/>
</dbReference>
<dbReference type="SMR" id="Q640Z7"/>
<dbReference type="DNASU" id="447756"/>
<dbReference type="GeneID" id="447756"/>
<dbReference type="KEGG" id="xla:447756"/>
<dbReference type="AGR" id="Xenbase:XB-GENE-6253390"/>
<dbReference type="CTD" id="447756"/>
<dbReference type="Xenbase" id="XB-GENE-6253390">
    <property type="gene designation" value="ift20.S"/>
</dbReference>
<dbReference type="OMA" id="FINQFMQ"/>
<dbReference type="OrthoDB" id="10254896at2759"/>
<dbReference type="Proteomes" id="UP000186698">
    <property type="component" value="Chromosome 2S"/>
</dbReference>
<dbReference type="Bgee" id="447756">
    <property type="expression patterns" value="Expressed in egg cell and 19 other cell types or tissues"/>
</dbReference>
<dbReference type="GO" id="GO:0005814">
    <property type="term" value="C:centriole"/>
    <property type="evidence" value="ECO:0007669"/>
    <property type="project" value="UniProtKB-SubCell"/>
</dbReference>
<dbReference type="GO" id="GO:0005813">
    <property type="term" value="C:centrosome"/>
    <property type="evidence" value="ECO:0000318"/>
    <property type="project" value="GO_Central"/>
</dbReference>
<dbReference type="GO" id="GO:0036064">
    <property type="term" value="C:ciliary basal body"/>
    <property type="evidence" value="ECO:0000318"/>
    <property type="project" value="GO_Central"/>
</dbReference>
<dbReference type="GO" id="GO:0097546">
    <property type="term" value="C:ciliary base"/>
    <property type="evidence" value="ECO:0000318"/>
    <property type="project" value="GO_Central"/>
</dbReference>
<dbReference type="GO" id="GO:0005929">
    <property type="term" value="C:cilium"/>
    <property type="evidence" value="ECO:0000250"/>
    <property type="project" value="UniProtKB"/>
</dbReference>
<dbReference type="GO" id="GO:0005737">
    <property type="term" value="C:cytoplasm"/>
    <property type="evidence" value="ECO:0000250"/>
    <property type="project" value="UniProtKB"/>
</dbReference>
<dbReference type="GO" id="GO:0005794">
    <property type="term" value="C:Golgi apparatus"/>
    <property type="evidence" value="ECO:0000250"/>
    <property type="project" value="UniProtKB"/>
</dbReference>
<dbReference type="GO" id="GO:0030990">
    <property type="term" value="C:intraciliary transport particle"/>
    <property type="evidence" value="ECO:0000318"/>
    <property type="project" value="GO_Central"/>
</dbReference>
<dbReference type="GO" id="GO:0043005">
    <property type="term" value="C:neuron projection"/>
    <property type="evidence" value="ECO:0000318"/>
    <property type="project" value="GO_Central"/>
</dbReference>
<dbReference type="GO" id="GO:0097730">
    <property type="term" value="C:non-motile cilium"/>
    <property type="evidence" value="ECO:0000318"/>
    <property type="project" value="GO_Central"/>
</dbReference>
<dbReference type="GO" id="GO:0030154">
    <property type="term" value="P:cell differentiation"/>
    <property type="evidence" value="ECO:0007669"/>
    <property type="project" value="UniProtKB-KW"/>
</dbReference>
<dbReference type="GO" id="GO:0060271">
    <property type="term" value="P:cilium assembly"/>
    <property type="evidence" value="ECO:0000318"/>
    <property type="project" value="GO_Central"/>
</dbReference>
<dbReference type="GO" id="GO:0061512">
    <property type="term" value="P:protein localization to cilium"/>
    <property type="evidence" value="ECO:0000318"/>
    <property type="project" value="GO_Central"/>
</dbReference>
<dbReference type="GO" id="GO:2000583">
    <property type="term" value="P:regulation of platelet-derived growth factor receptor-alpha signaling pathway"/>
    <property type="evidence" value="ECO:0000250"/>
    <property type="project" value="UniProtKB"/>
</dbReference>
<dbReference type="GO" id="GO:0007283">
    <property type="term" value="P:spermatogenesis"/>
    <property type="evidence" value="ECO:0000250"/>
    <property type="project" value="UniProtKB"/>
</dbReference>
<dbReference type="InterPro" id="IPR028172">
    <property type="entry name" value="FT20"/>
</dbReference>
<dbReference type="PANTHER" id="PTHR31978">
    <property type="entry name" value="INTRAFLAGELLAR TRANSPORT PROTEIN 20 HOMOLOG"/>
    <property type="match status" value="1"/>
</dbReference>
<dbReference type="PANTHER" id="PTHR31978:SF1">
    <property type="entry name" value="INTRAFLAGELLAR TRANSPORT PROTEIN 20 HOMOLOG"/>
    <property type="match status" value="1"/>
</dbReference>
<dbReference type="Pfam" id="PF14931">
    <property type="entry name" value="IFT20"/>
    <property type="match status" value="1"/>
</dbReference>
<organism>
    <name type="scientific">Xenopus laevis</name>
    <name type="common">African clawed frog</name>
    <dbReference type="NCBI Taxonomy" id="8355"/>
    <lineage>
        <taxon>Eukaryota</taxon>
        <taxon>Metazoa</taxon>
        <taxon>Chordata</taxon>
        <taxon>Craniata</taxon>
        <taxon>Vertebrata</taxon>
        <taxon>Euteleostomi</taxon>
        <taxon>Amphibia</taxon>
        <taxon>Batrachia</taxon>
        <taxon>Anura</taxon>
        <taxon>Pipoidea</taxon>
        <taxon>Pipidae</taxon>
        <taxon>Xenopodinae</taxon>
        <taxon>Xenopus</taxon>
        <taxon>Xenopus</taxon>
    </lineage>
</organism>
<name>IF20B_XENLA</name>
<feature type="chain" id="PRO_0000249307" description="Intraflagellar transport protein 20 homolog B">
    <location>
        <begin position="1"/>
        <end position="132"/>
    </location>
</feature>
<feature type="coiled-coil region" evidence="2">
    <location>
        <begin position="87"/>
        <end position="112"/>
    </location>
</feature>
<comment type="function">
    <text evidence="1">Involved in ciliary process assembly. May play a role in the trafficking of ciliary membrane proteins from the Golgi complex to the cilium. Regulates the platelet-derived growth factor receptor-alpha (PDGFRA) signaling pathway. Plays an important role in spermatogenesis, particularly spermiogenesis, when germ cells form flagella.</text>
</comment>
<comment type="subcellular location">
    <subcellularLocation>
        <location evidence="1">Golgi apparatus</location>
        <location evidence="1">cis-Golgi network</location>
    </subcellularLocation>
    <subcellularLocation>
        <location evidence="1">Cytoplasm</location>
        <location evidence="1">Cytoskeleton</location>
        <location evidence="1">Microtubule organizing center</location>
        <location evidence="1">Centrosome</location>
        <location evidence="1">Centriole</location>
    </subcellularLocation>
    <subcellularLocation>
        <location evidence="1">Cell projection</location>
        <location evidence="1">Cilium</location>
    </subcellularLocation>
    <subcellularLocation>
        <location evidence="1">Golgi apparatus</location>
    </subcellularLocation>
    <subcellularLocation>
        <location evidence="1">Cytoplasm</location>
    </subcellularLocation>
</comment>
<sequence length="132" mass="15366">MARDSLSEAGLHFDELNKLRILDPDVSQQTTELKEECRDFVDKIGHFQKVVGGLIELVDELAKETENEKMKAIGARNLLKSIAKQREAQQQQLYALIAEKKMQLERYRIEYDALCKVEAEQHEFIDQFNLQK</sequence>
<gene>
    <name type="primary">ift20-b</name>
</gene>
<reference key="1">
    <citation type="submission" date="2004-09" db="EMBL/GenBank/DDBJ databases">
        <authorList>
            <consortium name="NIH - Xenopus Gene Collection (XGC) project"/>
        </authorList>
    </citation>
    <scope>NUCLEOTIDE SEQUENCE [LARGE SCALE MRNA]</scope>
    <source>
        <tissue>Oocyte</tissue>
    </source>
</reference>
<accession>Q640Z7</accession>
<protein>
    <recommendedName>
        <fullName>Intraflagellar transport protein 20 homolog B</fullName>
    </recommendedName>
</protein>
<proteinExistence type="evidence at transcript level"/>